<organism>
    <name type="scientific">Xenopus laevis</name>
    <name type="common">African clawed frog</name>
    <dbReference type="NCBI Taxonomy" id="8355"/>
    <lineage>
        <taxon>Eukaryota</taxon>
        <taxon>Metazoa</taxon>
        <taxon>Chordata</taxon>
        <taxon>Craniata</taxon>
        <taxon>Vertebrata</taxon>
        <taxon>Euteleostomi</taxon>
        <taxon>Amphibia</taxon>
        <taxon>Batrachia</taxon>
        <taxon>Anura</taxon>
        <taxon>Pipoidea</taxon>
        <taxon>Pipidae</taxon>
        <taxon>Xenopodinae</taxon>
        <taxon>Xenopus</taxon>
        <taxon>Xenopus</taxon>
    </lineage>
</organism>
<evidence type="ECO:0000250" key="1">
    <source>
        <dbReference type="UniProtKB" id="P61793"/>
    </source>
</evidence>
<evidence type="ECO:0000250" key="2">
    <source>
        <dbReference type="UniProtKB" id="Q92633"/>
    </source>
</evidence>
<evidence type="ECO:0000255" key="3"/>
<evidence type="ECO:0000255" key="4">
    <source>
        <dbReference type="PROSITE-ProRule" id="PRU00521"/>
    </source>
</evidence>
<evidence type="ECO:0000269" key="5">
    <source>
    </source>
</evidence>
<evidence type="ECO:0000303" key="6">
    <source>
    </source>
</evidence>
<gene>
    <name type="primary">lpar1-a</name>
    <name type="synonym">lpa1r</name>
    <name type="synonym">lpa1r1</name>
</gene>
<reference key="1">
    <citation type="journal article" date="2001" name="J. Biol. Chem.">
        <title>Two novel Xenopus homologs of mammalian LPA1/EDG-2 function as lysophosphatidic acid receptors in Xenopus oocytes and mammalian cells.</title>
        <authorList>
            <person name="Kimura Y."/>
            <person name="Schmitt A."/>
            <person name="Fukushima N."/>
            <person name="Ishii I."/>
            <person name="Kimura H."/>
            <person name="Nebreda A.R."/>
            <person name="Chun J."/>
        </authorList>
    </citation>
    <scope>NUCLEOTIDE SEQUENCE [MRNA]</scope>
    <scope>FUNCTION</scope>
</reference>
<reference key="2">
    <citation type="submission" date="2003-03" db="EMBL/GenBank/DDBJ databases">
        <authorList>
            <consortium name="NIH - Xenopus Gene Collection (XGC) project"/>
        </authorList>
    </citation>
    <scope>NUCLEOTIDE SEQUENCE [LARGE SCALE MRNA]</scope>
    <source>
        <tissue>Embryo</tissue>
    </source>
</reference>
<keyword id="KW-1003">Cell membrane</keyword>
<keyword id="KW-1015">Disulfide bond</keyword>
<keyword id="KW-0967">Endosome</keyword>
<keyword id="KW-0297">G-protein coupled receptor</keyword>
<keyword id="KW-0325">Glycoprotein</keyword>
<keyword id="KW-0472">Membrane</keyword>
<keyword id="KW-0675">Receptor</keyword>
<keyword id="KW-1185">Reference proteome</keyword>
<keyword id="KW-0807">Transducer</keyword>
<keyword id="KW-0812">Transmembrane</keyword>
<keyword id="KW-1133">Transmembrane helix</keyword>
<proteinExistence type="evidence at transcript level"/>
<dbReference type="EMBL" id="AJ249843">
    <property type="protein sequence ID" value="CAB62282.1"/>
    <property type="molecule type" value="mRNA"/>
</dbReference>
<dbReference type="EMBL" id="BC049389">
    <property type="protein sequence ID" value="AAH49389.1"/>
    <property type="molecule type" value="mRNA"/>
</dbReference>
<dbReference type="SMR" id="Q9PU17"/>
<dbReference type="GlyCosmos" id="Q9PU17">
    <property type="glycosylation" value="2 sites, No reported glycans"/>
</dbReference>
<dbReference type="DNASU" id="379403"/>
<dbReference type="GeneID" id="379403"/>
<dbReference type="KEGG" id="xla:379403"/>
<dbReference type="AGR" id="Xenbase:XB-GENE-6255824"/>
<dbReference type="CTD" id="379403"/>
<dbReference type="Xenbase" id="XB-GENE-6255824">
    <property type="gene designation" value="lpar1.S"/>
</dbReference>
<dbReference type="OMA" id="FKTGPNT"/>
<dbReference type="OrthoDB" id="5987098at2759"/>
<dbReference type="Proteomes" id="UP000186698">
    <property type="component" value="Chromosome 1S"/>
</dbReference>
<dbReference type="Bgee" id="379403">
    <property type="expression patterns" value="Expressed in blastula and 19 other cell types or tissues"/>
</dbReference>
<dbReference type="GO" id="GO:0009986">
    <property type="term" value="C:cell surface"/>
    <property type="evidence" value="ECO:0007669"/>
    <property type="project" value="UniProtKB-SubCell"/>
</dbReference>
<dbReference type="GO" id="GO:0005737">
    <property type="term" value="C:cytoplasm"/>
    <property type="evidence" value="ECO:0000318"/>
    <property type="project" value="GO_Central"/>
</dbReference>
<dbReference type="GO" id="GO:0005768">
    <property type="term" value="C:endosome"/>
    <property type="evidence" value="ECO:0007669"/>
    <property type="project" value="UniProtKB-SubCell"/>
</dbReference>
<dbReference type="GO" id="GO:0005886">
    <property type="term" value="C:plasma membrane"/>
    <property type="evidence" value="ECO:0000250"/>
    <property type="project" value="UniProtKB"/>
</dbReference>
<dbReference type="GO" id="GO:0070915">
    <property type="term" value="F:lysophosphatidic acid receptor activity"/>
    <property type="evidence" value="ECO:0000250"/>
    <property type="project" value="UniProtKB"/>
</dbReference>
<dbReference type="GO" id="GO:0007189">
    <property type="term" value="P:adenylate cyclase-activating G protein-coupled receptor signaling pathway"/>
    <property type="evidence" value="ECO:0000318"/>
    <property type="project" value="GO_Central"/>
</dbReference>
<dbReference type="GO" id="GO:0007193">
    <property type="term" value="P:adenylate cyclase-inhibiting G protein-coupled receptor signaling pathway"/>
    <property type="evidence" value="ECO:0000250"/>
    <property type="project" value="UniProtKB"/>
</dbReference>
<dbReference type="GO" id="GO:0010977">
    <property type="term" value="P:negative regulation of neuron projection development"/>
    <property type="evidence" value="ECO:0000250"/>
    <property type="project" value="UniProtKB"/>
</dbReference>
<dbReference type="GO" id="GO:0022008">
    <property type="term" value="P:neurogenesis"/>
    <property type="evidence" value="ECO:0000318"/>
    <property type="project" value="GO_Central"/>
</dbReference>
<dbReference type="GO" id="GO:0043410">
    <property type="term" value="P:positive regulation of MAPK cascade"/>
    <property type="evidence" value="ECO:0000250"/>
    <property type="project" value="UniProtKB"/>
</dbReference>
<dbReference type="GO" id="GO:0035025">
    <property type="term" value="P:positive regulation of Rho protein signal transduction"/>
    <property type="evidence" value="ECO:0000250"/>
    <property type="project" value="UniProtKB"/>
</dbReference>
<dbReference type="GO" id="GO:0051496">
    <property type="term" value="P:positive regulation of stress fiber assembly"/>
    <property type="evidence" value="ECO:0000250"/>
    <property type="project" value="UniProtKB"/>
</dbReference>
<dbReference type="GO" id="GO:0008360">
    <property type="term" value="P:regulation of cell shape"/>
    <property type="evidence" value="ECO:0000250"/>
    <property type="project" value="UniProtKB"/>
</dbReference>
<dbReference type="GO" id="GO:0019222">
    <property type="term" value="P:regulation of metabolic process"/>
    <property type="evidence" value="ECO:0000318"/>
    <property type="project" value="GO_Central"/>
</dbReference>
<dbReference type="CDD" id="cd15344">
    <property type="entry name" value="7tmA_LPAR1_Edg2"/>
    <property type="match status" value="1"/>
</dbReference>
<dbReference type="FunFam" id="1.20.1070.10:FF:000025">
    <property type="entry name" value="Lysophosphatidic acid receptor 1"/>
    <property type="match status" value="1"/>
</dbReference>
<dbReference type="Gene3D" id="1.20.1070.10">
    <property type="entry name" value="Rhodopsin 7-helix transmembrane proteins"/>
    <property type="match status" value="1"/>
</dbReference>
<dbReference type="InterPro" id="IPR000276">
    <property type="entry name" value="GPCR_Rhodpsn"/>
</dbReference>
<dbReference type="InterPro" id="IPR017452">
    <property type="entry name" value="GPCR_Rhodpsn_7TM"/>
</dbReference>
<dbReference type="InterPro" id="IPR004065">
    <property type="entry name" value="LPA_rcpt"/>
</dbReference>
<dbReference type="InterPro" id="IPR002277">
    <property type="entry name" value="LPA_rcpt_EDG2"/>
</dbReference>
<dbReference type="PANTHER" id="PTHR22750">
    <property type="entry name" value="G-PROTEIN COUPLED RECEPTOR"/>
    <property type="match status" value="1"/>
</dbReference>
<dbReference type="Pfam" id="PF00001">
    <property type="entry name" value="7tm_1"/>
    <property type="match status" value="1"/>
</dbReference>
<dbReference type="PRINTS" id="PR01148">
    <property type="entry name" value="EDG2RECEPTOR"/>
</dbReference>
<dbReference type="PRINTS" id="PR00237">
    <property type="entry name" value="GPCRRHODOPSN"/>
</dbReference>
<dbReference type="PRINTS" id="PR01527">
    <property type="entry name" value="LPARECEPTOR"/>
</dbReference>
<dbReference type="SMART" id="SM01381">
    <property type="entry name" value="7TM_GPCR_Srsx"/>
    <property type="match status" value="1"/>
</dbReference>
<dbReference type="SUPFAM" id="SSF81321">
    <property type="entry name" value="Family A G protein-coupled receptor-like"/>
    <property type="match status" value="1"/>
</dbReference>
<dbReference type="PROSITE" id="PS00237">
    <property type="entry name" value="G_PROTEIN_RECEP_F1_1"/>
    <property type="match status" value="1"/>
</dbReference>
<dbReference type="PROSITE" id="PS50262">
    <property type="entry name" value="G_PROTEIN_RECEP_F1_2"/>
    <property type="match status" value="1"/>
</dbReference>
<name>LPA11_XENLA</name>
<accession>Q9PU17</accession>
<accession>Q5D097</accession>
<feature type="chain" id="PRO_0000069704" description="Lysophosphatidic acid receptor 1-A">
    <location>
        <begin position="1"/>
        <end position="366"/>
    </location>
</feature>
<feature type="topological domain" description="Extracellular" evidence="2">
    <location>
        <begin position="1"/>
        <end position="52"/>
    </location>
</feature>
<feature type="transmembrane region" description="Helical; Name=1" evidence="2">
    <location>
        <begin position="53"/>
        <end position="77"/>
    </location>
</feature>
<feature type="topological domain" description="Cytoplasmic" evidence="2">
    <location>
        <begin position="78"/>
        <end position="85"/>
    </location>
</feature>
<feature type="transmembrane region" description="Helical; Name=2" evidence="2">
    <location>
        <begin position="86"/>
        <end position="109"/>
    </location>
</feature>
<feature type="topological domain" description="Extracellular" evidence="2">
    <location>
        <begin position="110"/>
        <end position="123"/>
    </location>
</feature>
<feature type="transmembrane region" description="Helical; Name=3" evidence="2">
    <location>
        <begin position="124"/>
        <end position="146"/>
    </location>
</feature>
<feature type="topological domain" description="Cytoplasmic" evidence="2">
    <location>
        <begin position="147"/>
        <end position="165"/>
    </location>
</feature>
<feature type="transmembrane region" description="Helical; Name=4" evidence="2">
    <location>
        <begin position="166"/>
        <end position="186"/>
    </location>
</feature>
<feature type="topological domain" description="Extracellular" evidence="2">
    <location>
        <begin position="187"/>
        <end position="206"/>
    </location>
</feature>
<feature type="transmembrane region" description="Helical; Name=5" evidence="2">
    <location>
        <begin position="207"/>
        <end position="227"/>
    </location>
</feature>
<feature type="topological domain" description="Cytoplasmic" evidence="2">
    <location>
        <begin position="228"/>
        <end position="257"/>
    </location>
</feature>
<feature type="transmembrane region" description="Helical; Name=6" evidence="2">
    <location>
        <begin position="258"/>
        <end position="282"/>
    </location>
</feature>
<feature type="topological domain" description="Extracellular" evidence="2">
    <location>
        <begin position="283"/>
        <end position="296"/>
    </location>
</feature>
<feature type="transmembrane region" description="Helical; Name=7" evidence="2">
    <location>
        <begin position="297"/>
        <end position="317"/>
    </location>
</feature>
<feature type="topological domain" description="Cytoplasmic" evidence="2">
    <location>
        <begin position="318"/>
        <end position="366"/>
    </location>
</feature>
<feature type="binding site" evidence="2">
    <location>
        <position position="41"/>
    </location>
    <ligand>
        <name>a 1-acyl-sn-glycero-3-phosphate</name>
        <dbReference type="ChEBI" id="CHEBI:57970"/>
    </ligand>
</feature>
<feature type="binding site" evidence="2">
    <location>
        <begin position="126"/>
        <end position="131"/>
    </location>
    <ligand>
        <name>a 1-acyl-sn-glycero-3-phosphate</name>
        <dbReference type="ChEBI" id="CHEBI:57970"/>
    </ligand>
</feature>
<feature type="binding site" evidence="2">
    <location>
        <position position="212"/>
    </location>
    <ligand>
        <name>a 1-acyl-sn-glycero-3-phosphate</name>
        <dbReference type="ChEBI" id="CHEBI:57970"/>
    </ligand>
</feature>
<feature type="glycosylation site" description="N-linked (GlcNAc...) asparagine" evidence="3">
    <location>
        <position position="29"/>
    </location>
</feature>
<feature type="glycosylation site" description="N-linked (GlcNAc...) asparagine" evidence="3">
    <location>
        <position position="37"/>
    </location>
</feature>
<feature type="disulfide bond" evidence="2">
    <location>
        <begin position="26"/>
        <end position="192"/>
    </location>
</feature>
<feature type="disulfide bond" evidence="2">
    <location>
        <begin position="190"/>
        <end position="197"/>
    </location>
</feature>
<feature type="disulfide bond" evidence="2">
    <location>
        <begin position="286"/>
        <end position="289"/>
    </location>
</feature>
<sequence>MASLSEFVSEPISMMSQTSAASESQCYYNETIAFFYNRSGKYLATEWNAVSKLVMGLGITVCIFIMLANLLVMVAIYVNRRFHFPIYYLMANLAAADFFAGLAYFYLMFNTGPNTRRLTVSTWLLRQGLIDTSLTASVANLLAIAIERHITVFRMQLHTRMSNRRVVVVIVVIWTVAIVMGAIPSVGWNCICDLEQCSNMAPLYSDSYLIFWTIFNLVTFVVMVVLYAHIFVYVRQKTMRMSRHSSGPRRNRDTMMSLLKTVVIVLGAFIVCWTPGLVLLLLDICCPQCNILAYEKFFLLLAEFNSAMNPIIYSYRDKEMSATFKQILCCQRTENVNGPTEGSDRSASSLNHTILAGVHSNDHSVV</sequence>
<protein>
    <recommendedName>
        <fullName>Lysophosphatidic acid receptor 1-A</fullName>
        <shortName>LPA receptor 1-A</shortName>
        <shortName evidence="6">LPA-1-A</shortName>
    </recommendedName>
    <alternativeName>
        <fullName>Lysophosphatidic acid receptor LPA1 homolog 1</fullName>
        <shortName>xLPA1-1</shortName>
    </alternativeName>
</protein>
<comment type="function">
    <text evidence="1 5">Receptor for lysophosphatidic acid (LPA) (PubMed:11278944). Plays a role in the reorganization of the actin cytoskeleton, cell migration, differentiation and proliferation, and thereby contributes to the responses to tissue damage and infectious agents. Activates downstream signaling cascades via the G(i)/G(o), G(12)/G(13), and G(q) families of heteromeric G proteins. Signaling inhibits adenylyl cyclase activity and decreases cellular cAMP levels (PubMed:11278944). Signaling triggers an increase of cytoplasmic Ca(2+) levels. Signaling leads to the activation of phospholipase C (PLC) and the formation of inositol 1,4,5-trisphosphate. Signaling mediates activation of down-stream MAP kinases (By similarity). Contributes to the regulation of cell shape (PubMed:11278944). Promotes Rho-dependent reorganization of the actin cytoskeleton in neuronal cells and neurite retraction. Promotes the activation of Rho and the formation of actin stress fibers. Promotes formation of lamellipodia at the leading edge of migrating cells via activation of Rac. Through its function as lysophosphatidic acid receptor, plays a role in chemotaxis and cell migration, including responses to injury and wounding. Promotes cell proliferation in response to lysophosphatidic acid (By similarity).</text>
</comment>
<comment type="subcellular location">
    <subcellularLocation>
        <location evidence="1">Cell surface</location>
    </subcellularLocation>
    <subcellularLocation>
        <location evidence="1">Cell membrane</location>
        <topology evidence="2">Multi-pass membrane protein</topology>
    </subcellularLocation>
    <subcellularLocation>
        <location evidence="2">Endosome</location>
    </subcellularLocation>
    <text evidence="2">Prior to LPA treatment found predominantly at the cell surface. Internalized after LPA treatment.</text>
</comment>
<comment type="tissue specificity">
    <text>Expressed at high levels in oocytes and at lower levels in brain and spinal cord. Below detection level in lung, heart, kidney, liver, muscle, stomach, and intestine.</text>
</comment>
<comment type="similarity">
    <text evidence="4">Belongs to the G-protein coupled receptor 1 family.</text>
</comment>